<comment type="function">
    <text evidence="5">Catalyzes the formation of S-adenosylmethionine from methionine and ATP. The reaction comprises two steps that are both catalyzed by the same enzyme: formation of S-adenosylmethionine (AdoMet) and triphosphate, and subsequent hydrolysis of the triphosphate.</text>
</comment>
<comment type="catalytic activity">
    <reaction evidence="5">
        <text>L-methionine + ATP + H2O = S-adenosyl-L-methionine + phosphate + diphosphate</text>
        <dbReference type="Rhea" id="RHEA:21080"/>
        <dbReference type="ChEBI" id="CHEBI:15377"/>
        <dbReference type="ChEBI" id="CHEBI:30616"/>
        <dbReference type="ChEBI" id="CHEBI:33019"/>
        <dbReference type="ChEBI" id="CHEBI:43474"/>
        <dbReference type="ChEBI" id="CHEBI:57844"/>
        <dbReference type="ChEBI" id="CHEBI:59789"/>
        <dbReference type="EC" id="2.5.1.6"/>
    </reaction>
</comment>
<comment type="cofactor">
    <cofactor evidence="5">
        <name>Mn(2+)</name>
        <dbReference type="ChEBI" id="CHEBI:29035"/>
    </cofactor>
    <cofactor evidence="5">
        <name>Mg(2+)</name>
        <dbReference type="ChEBI" id="CHEBI:18420"/>
    </cofactor>
    <cofactor evidence="5">
        <name>Co(2+)</name>
        <dbReference type="ChEBI" id="CHEBI:48828"/>
    </cofactor>
    <text evidence="3 5">Binds 2 divalent ions per subunit. The metal ions interact primarily with the substrate (By similarity). Can utilize magnesium, manganese or cobalt (in vitro) (By similarity).</text>
</comment>
<comment type="cofactor">
    <cofactor evidence="5">
        <name>K(+)</name>
        <dbReference type="ChEBI" id="CHEBI:29103"/>
    </cofactor>
    <text evidence="3">Binds 1 potassium ion per subunit. The potassium ion interacts primarily with the substrate (By similarity).</text>
</comment>
<comment type="pathway">
    <text evidence="5">Amino-acid biosynthesis; S-adenosyl-L-methionine biosynthesis; S-adenosyl-L-methionine from L-methionine: step 1/1.</text>
</comment>
<comment type="subunit">
    <text evidence="1">Homotetramer.</text>
</comment>
<comment type="subcellular location">
    <subcellularLocation>
        <location evidence="1">Cytoplasm</location>
    </subcellularLocation>
</comment>
<comment type="similarity">
    <text evidence="6">Belongs to the AdoMet synthase family.</text>
</comment>
<proteinExistence type="inferred from homology"/>
<sequence length="394" mass="43279">MAETFLFTSESVNEGHPDKLCDQISDAVLDACLEQDPDSKVACETCTKTNMVMVFGEITTKANVDYEKIVRDTCRTIGFISDDVGLDADKCKVLVNIEQQSPDIAQGVHGHFTKRPEEVGAGDQGHMFGYATDETPELMPLTHVLATKLGSRLTEVRKNGTCAWLRPDGKTQVTIEYYNENGAMVPVRVHTVLISTQHDETVSNDQIAADLKEHVIKPVIPEKYLDEKTIFHLNPSGRFVIGGPHGDAGLTGRKIIIDTYGGWGAHGGGAFSGKDPTKVDRSGAYVVRQAAKSIVANGLARRCIVQVSYAIGVPEPLSVFVDSYGTGKIPDREILQIVKENFDFRPGMITINLDLKRGGNSRFLKTAAYGHFGRDDPDFTWEVVKPLKWEKPQA</sequence>
<dbReference type="EC" id="2.5.1.6" evidence="5"/>
<dbReference type="EMBL" id="AC144563">
    <property type="protein sequence ID" value="ABO80948.1"/>
    <property type="molecule type" value="Genomic_DNA"/>
</dbReference>
<dbReference type="RefSeq" id="XP_003626035.1">
    <property type="nucleotide sequence ID" value="XM_003625987.2"/>
</dbReference>
<dbReference type="SMR" id="A4PU48"/>
<dbReference type="PaxDb" id="3880-AES82253"/>
<dbReference type="ProMEX" id="A4PU48"/>
<dbReference type="EnsemblPlants" id="rna43857">
    <property type="protein sequence ID" value="RHN49069.1"/>
    <property type="gene ID" value="gene43857"/>
</dbReference>
<dbReference type="GeneID" id="11435308"/>
<dbReference type="Gramene" id="rna43857">
    <property type="protein sequence ID" value="RHN49069.1"/>
    <property type="gene ID" value="gene43857"/>
</dbReference>
<dbReference type="KEGG" id="mtr:11435308"/>
<dbReference type="eggNOG" id="KOG1506">
    <property type="taxonomic scope" value="Eukaryota"/>
</dbReference>
<dbReference type="HOGENOM" id="CLU_041802_0_1_1"/>
<dbReference type="OMA" id="WILPDCK"/>
<dbReference type="OrthoDB" id="5852090at2759"/>
<dbReference type="UniPathway" id="UPA00315">
    <property type="reaction ID" value="UER00080"/>
</dbReference>
<dbReference type="ExpressionAtlas" id="A4PU48">
    <property type="expression patterns" value="differential"/>
</dbReference>
<dbReference type="GO" id="GO:0005737">
    <property type="term" value="C:cytoplasm"/>
    <property type="evidence" value="ECO:0007669"/>
    <property type="project" value="UniProtKB-SubCell"/>
</dbReference>
<dbReference type="GO" id="GO:0005524">
    <property type="term" value="F:ATP binding"/>
    <property type="evidence" value="ECO:0007669"/>
    <property type="project" value="UniProtKB-KW"/>
</dbReference>
<dbReference type="GO" id="GO:0046872">
    <property type="term" value="F:metal ion binding"/>
    <property type="evidence" value="ECO:0007669"/>
    <property type="project" value="UniProtKB-KW"/>
</dbReference>
<dbReference type="GO" id="GO:0004478">
    <property type="term" value="F:methionine adenosyltransferase activity"/>
    <property type="evidence" value="ECO:0007669"/>
    <property type="project" value="UniProtKB-EC"/>
</dbReference>
<dbReference type="GO" id="GO:0006730">
    <property type="term" value="P:one-carbon metabolic process"/>
    <property type="evidence" value="ECO:0007669"/>
    <property type="project" value="UniProtKB-KW"/>
</dbReference>
<dbReference type="GO" id="GO:0006556">
    <property type="term" value="P:S-adenosylmethionine biosynthetic process"/>
    <property type="evidence" value="ECO:0007669"/>
    <property type="project" value="UniProtKB-UniPathway"/>
</dbReference>
<dbReference type="CDD" id="cd18079">
    <property type="entry name" value="S-AdoMet_synt"/>
    <property type="match status" value="1"/>
</dbReference>
<dbReference type="FunFam" id="3.30.300.10:FF:000003">
    <property type="entry name" value="S-adenosylmethionine synthase"/>
    <property type="match status" value="1"/>
</dbReference>
<dbReference type="FunFam" id="3.30.300.10:FF:000004">
    <property type="entry name" value="S-adenosylmethionine synthase"/>
    <property type="match status" value="1"/>
</dbReference>
<dbReference type="FunFam" id="3.30.300.10:FF:000011">
    <property type="entry name" value="S-adenosylmethionine synthase"/>
    <property type="match status" value="1"/>
</dbReference>
<dbReference type="FunFam" id="3.30.300.10:FF:000021">
    <property type="entry name" value="S-adenosylmethionine synthetase 1"/>
    <property type="match status" value="1"/>
</dbReference>
<dbReference type="Gene3D" id="3.30.300.10">
    <property type="match status" value="3"/>
</dbReference>
<dbReference type="HAMAP" id="MF_00086">
    <property type="entry name" value="S_AdoMet_synth1"/>
    <property type="match status" value="1"/>
</dbReference>
<dbReference type="InterPro" id="IPR022631">
    <property type="entry name" value="ADOMET_SYNTHASE_CS"/>
</dbReference>
<dbReference type="InterPro" id="IPR022630">
    <property type="entry name" value="S-AdoMet_synt_C"/>
</dbReference>
<dbReference type="InterPro" id="IPR022629">
    <property type="entry name" value="S-AdoMet_synt_central"/>
</dbReference>
<dbReference type="InterPro" id="IPR022628">
    <property type="entry name" value="S-AdoMet_synt_N"/>
</dbReference>
<dbReference type="InterPro" id="IPR002133">
    <property type="entry name" value="S-AdoMet_synthetase"/>
</dbReference>
<dbReference type="InterPro" id="IPR022636">
    <property type="entry name" value="S-AdoMet_synthetase_sfam"/>
</dbReference>
<dbReference type="NCBIfam" id="TIGR01034">
    <property type="entry name" value="metK"/>
    <property type="match status" value="1"/>
</dbReference>
<dbReference type="PANTHER" id="PTHR11964">
    <property type="entry name" value="S-ADENOSYLMETHIONINE SYNTHETASE"/>
    <property type="match status" value="1"/>
</dbReference>
<dbReference type="Pfam" id="PF02773">
    <property type="entry name" value="S-AdoMet_synt_C"/>
    <property type="match status" value="1"/>
</dbReference>
<dbReference type="Pfam" id="PF02772">
    <property type="entry name" value="S-AdoMet_synt_M"/>
    <property type="match status" value="1"/>
</dbReference>
<dbReference type="Pfam" id="PF00438">
    <property type="entry name" value="S-AdoMet_synt_N"/>
    <property type="match status" value="1"/>
</dbReference>
<dbReference type="PIRSF" id="PIRSF000497">
    <property type="entry name" value="MAT"/>
    <property type="match status" value="1"/>
</dbReference>
<dbReference type="SUPFAM" id="SSF55973">
    <property type="entry name" value="S-adenosylmethionine synthetase"/>
    <property type="match status" value="3"/>
</dbReference>
<dbReference type="PROSITE" id="PS00376">
    <property type="entry name" value="ADOMET_SYNTHASE_1"/>
    <property type="match status" value="1"/>
</dbReference>
<dbReference type="PROSITE" id="PS00377">
    <property type="entry name" value="ADOMET_SYNTHASE_2"/>
    <property type="match status" value="1"/>
</dbReference>
<gene>
    <name type="primary">METK</name>
    <name type="ORF">MtrDRAFT_AC144563g19v2</name>
</gene>
<protein>
    <recommendedName>
        <fullName>S-adenosylmethionine synthase</fullName>
        <shortName>AdoMet synthase</shortName>
        <ecNumber evidence="5">2.5.1.6</ecNumber>
    </recommendedName>
    <alternativeName>
        <fullName>Methionine adenosyltransferase</fullName>
        <shortName>MAT</shortName>
    </alternativeName>
</protein>
<keyword id="KW-0067">ATP-binding</keyword>
<keyword id="KW-0170">Cobalt</keyword>
<keyword id="KW-0963">Cytoplasm</keyword>
<keyword id="KW-0460">Magnesium</keyword>
<keyword id="KW-0479">Metal-binding</keyword>
<keyword id="KW-0547">Nucleotide-binding</keyword>
<keyword id="KW-0554">One-carbon metabolism</keyword>
<keyword id="KW-0630">Potassium</keyword>
<keyword id="KW-0808">Transferase</keyword>
<evidence type="ECO:0000250" key="1"/>
<evidence type="ECO:0000250" key="2">
    <source>
        <dbReference type="UniProtKB" id="P0A817"/>
    </source>
</evidence>
<evidence type="ECO:0000250" key="3">
    <source>
        <dbReference type="UniProtKB" id="P13444"/>
    </source>
</evidence>
<evidence type="ECO:0000250" key="4">
    <source>
        <dbReference type="UniProtKB" id="Q00266"/>
    </source>
</evidence>
<evidence type="ECO:0000250" key="5">
    <source>
        <dbReference type="UniProtKB" id="Q96551"/>
    </source>
</evidence>
<evidence type="ECO:0000305" key="6"/>
<organism>
    <name type="scientific">Medicago truncatula</name>
    <name type="common">Barrel medic</name>
    <name type="synonym">Medicago tribuloides</name>
    <dbReference type="NCBI Taxonomy" id="3880"/>
    <lineage>
        <taxon>Eukaryota</taxon>
        <taxon>Viridiplantae</taxon>
        <taxon>Streptophyta</taxon>
        <taxon>Embryophyta</taxon>
        <taxon>Tracheophyta</taxon>
        <taxon>Spermatophyta</taxon>
        <taxon>Magnoliopsida</taxon>
        <taxon>eudicotyledons</taxon>
        <taxon>Gunneridae</taxon>
        <taxon>Pentapetalae</taxon>
        <taxon>rosids</taxon>
        <taxon>fabids</taxon>
        <taxon>Fabales</taxon>
        <taxon>Fabaceae</taxon>
        <taxon>Papilionoideae</taxon>
        <taxon>50 kb inversion clade</taxon>
        <taxon>NPAAA clade</taxon>
        <taxon>Hologalegina</taxon>
        <taxon>IRL clade</taxon>
        <taxon>Trifolieae</taxon>
        <taxon>Medicago</taxon>
    </lineage>
</organism>
<name>METK_MEDTR</name>
<feature type="chain" id="PRO_0000363030" description="S-adenosylmethionine synthase">
    <location>
        <begin position="1"/>
        <end position="394"/>
    </location>
</feature>
<feature type="binding site" evidence="3">
    <location>
        <position position="10"/>
    </location>
    <ligand>
        <name>Mg(2+)</name>
        <dbReference type="ChEBI" id="CHEBI:18420"/>
    </ligand>
</feature>
<feature type="binding site" description="in other chain" evidence="4">
    <location>
        <position position="16"/>
    </location>
    <ligand>
        <name>ATP</name>
        <dbReference type="ChEBI" id="CHEBI:30616"/>
        <note>ligand shared between two neighboring subunits</note>
    </ligand>
</feature>
<feature type="binding site" evidence="2">
    <location>
        <position position="44"/>
    </location>
    <ligand>
        <name>K(+)</name>
        <dbReference type="ChEBI" id="CHEBI:29103"/>
    </ligand>
</feature>
<feature type="binding site" description="in other chain" evidence="2">
    <location>
        <position position="57"/>
    </location>
    <ligand>
        <name>L-methionine</name>
        <dbReference type="ChEBI" id="CHEBI:57844"/>
        <note>ligand shared between two neighboring subunits</note>
    </ligand>
</feature>
<feature type="binding site" description="in other chain" evidence="2">
    <location>
        <position position="100"/>
    </location>
    <ligand>
        <name>L-methionine</name>
        <dbReference type="ChEBI" id="CHEBI:57844"/>
        <note>ligand shared between two neighboring subunits</note>
    </ligand>
</feature>
<feature type="binding site" description="in other chain" evidence="4">
    <location>
        <begin position="168"/>
        <end position="170"/>
    </location>
    <ligand>
        <name>ATP</name>
        <dbReference type="ChEBI" id="CHEBI:30616"/>
        <note>ligand shared between two neighboring subunits</note>
    </ligand>
</feature>
<feature type="binding site" description="in other chain" evidence="4">
    <location>
        <begin position="236"/>
        <end position="239"/>
    </location>
    <ligand>
        <name>ATP</name>
        <dbReference type="ChEBI" id="CHEBI:30616"/>
        <note>ligand shared between two neighboring subunits</note>
    </ligand>
</feature>
<feature type="binding site" description="in other chain" evidence="4">
    <location>
        <position position="247"/>
    </location>
    <ligand>
        <name>ATP</name>
        <dbReference type="ChEBI" id="CHEBI:30616"/>
        <note>ligand shared between two neighboring subunits</note>
    </ligand>
</feature>
<feature type="binding site" evidence="2">
    <location>
        <position position="247"/>
    </location>
    <ligand>
        <name>L-methionine</name>
        <dbReference type="ChEBI" id="CHEBI:57844"/>
        <note>ligand shared between two neighboring subunits</note>
    </ligand>
</feature>
<feature type="binding site" description="in other chain" evidence="2">
    <location>
        <begin position="253"/>
        <end position="254"/>
    </location>
    <ligand>
        <name>ATP</name>
        <dbReference type="ChEBI" id="CHEBI:30616"/>
        <note>ligand shared between two neighboring subunits</note>
    </ligand>
</feature>
<feature type="binding site" evidence="2">
    <location>
        <position position="270"/>
    </location>
    <ligand>
        <name>ATP</name>
        <dbReference type="ChEBI" id="CHEBI:30616"/>
        <note>ligand shared between two neighboring subunits</note>
    </ligand>
</feature>
<feature type="binding site" evidence="2">
    <location>
        <position position="274"/>
    </location>
    <ligand>
        <name>ATP</name>
        <dbReference type="ChEBI" id="CHEBI:30616"/>
        <note>ligand shared between two neighboring subunits</note>
    </ligand>
</feature>
<feature type="binding site" evidence="3">
    <location>
        <position position="278"/>
    </location>
    <ligand>
        <name>ATP</name>
        <dbReference type="ChEBI" id="CHEBI:30616"/>
        <note>ligand shared between two neighboring subunits</note>
    </ligand>
</feature>
<feature type="binding site" description="in other chain" evidence="2">
    <location>
        <position position="278"/>
    </location>
    <ligand>
        <name>L-methionine</name>
        <dbReference type="ChEBI" id="CHEBI:57844"/>
        <note>ligand shared between two neighboring subunits</note>
    </ligand>
</feature>
<reference key="1">
    <citation type="submission" date="2006-04" db="EMBL/GenBank/DDBJ databases">
        <authorList>
            <consortium name="The international Medicago genome annotation group"/>
        </authorList>
    </citation>
    <scope>NUCLEOTIDE SEQUENCE [LARGE SCALE GENOMIC DNA]</scope>
</reference>
<accession>A4PU48</accession>